<proteinExistence type="inferred from homology"/>
<comment type="function">
    <text evidence="1">One of the essential components for the initiation of protein synthesis. Stabilizes the binding of IF-2 and IF-3 on the 30S subunit to which N-formylmethionyl-tRNA(fMet) subsequently binds. Helps modulate mRNA selection, yielding the 30S pre-initiation complex (PIC). Upon addition of the 50S ribosomal subunit IF-1, IF-2 and IF-3 are released leaving the mature 70S translation initiation complex.</text>
</comment>
<comment type="subunit">
    <text evidence="1">Component of the 30S ribosomal translation pre-initiation complex which assembles on the 30S ribosome in the order IF-2 and IF-3, IF-1 and N-formylmethionyl-tRNA(fMet); mRNA recruitment can occur at any time during PIC assembly.</text>
</comment>
<comment type="subcellular location">
    <subcellularLocation>
        <location evidence="1">Cytoplasm</location>
    </subcellularLocation>
</comment>
<comment type="similarity">
    <text evidence="1">Belongs to the IF-1 family.</text>
</comment>
<feature type="chain" id="PRO_0000263841" description="Translation initiation factor IF-1">
    <location>
        <begin position="1"/>
        <end position="72"/>
    </location>
</feature>
<feature type="domain" description="S1-like" evidence="1">
    <location>
        <begin position="1"/>
        <end position="72"/>
    </location>
</feature>
<name>IF1_PSEPF</name>
<organism>
    <name type="scientific">Pseudomonas fluorescens (strain Pf0-1)</name>
    <dbReference type="NCBI Taxonomy" id="205922"/>
    <lineage>
        <taxon>Bacteria</taxon>
        <taxon>Pseudomonadati</taxon>
        <taxon>Pseudomonadota</taxon>
        <taxon>Gammaproteobacteria</taxon>
        <taxon>Pseudomonadales</taxon>
        <taxon>Pseudomonadaceae</taxon>
        <taxon>Pseudomonas</taxon>
    </lineage>
</organism>
<keyword id="KW-0963">Cytoplasm</keyword>
<keyword id="KW-0396">Initiation factor</keyword>
<keyword id="KW-0648">Protein biosynthesis</keyword>
<keyword id="KW-0694">RNA-binding</keyword>
<keyword id="KW-0699">rRNA-binding</keyword>
<protein>
    <recommendedName>
        <fullName evidence="1">Translation initiation factor IF-1</fullName>
    </recommendedName>
</protein>
<accession>Q3KA77</accession>
<gene>
    <name evidence="1" type="primary">infA</name>
    <name type="ordered locus">Pfl01_3589</name>
</gene>
<evidence type="ECO:0000255" key="1">
    <source>
        <dbReference type="HAMAP-Rule" id="MF_00075"/>
    </source>
</evidence>
<sequence length="72" mass="8303">MSKEDSFEMEGTVVDTLPNTMFRVELENGHVVTAHISGKMRKNYIRILTGDKVRVELTPYDLSKGRITYRAR</sequence>
<dbReference type="EMBL" id="CP000094">
    <property type="protein sequence ID" value="ABA75327.1"/>
    <property type="molecule type" value="Genomic_DNA"/>
</dbReference>
<dbReference type="RefSeq" id="WP_002553999.1">
    <property type="nucleotide sequence ID" value="NC_007492.2"/>
</dbReference>
<dbReference type="SMR" id="Q3KA77"/>
<dbReference type="GeneID" id="98638452"/>
<dbReference type="KEGG" id="pfo:Pfl01_3589"/>
<dbReference type="eggNOG" id="COG0361">
    <property type="taxonomic scope" value="Bacteria"/>
</dbReference>
<dbReference type="HOGENOM" id="CLU_151267_1_0_6"/>
<dbReference type="Proteomes" id="UP000002704">
    <property type="component" value="Chromosome"/>
</dbReference>
<dbReference type="GO" id="GO:0005829">
    <property type="term" value="C:cytosol"/>
    <property type="evidence" value="ECO:0007669"/>
    <property type="project" value="TreeGrafter"/>
</dbReference>
<dbReference type="GO" id="GO:0043022">
    <property type="term" value="F:ribosome binding"/>
    <property type="evidence" value="ECO:0007669"/>
    <property type="project" value="UniProtKB-UniRule"/>
</dbReference>
<dbReference type="GO" id="GO:0019843">
    <property type="term" value="F:rRNA binding"/>
    <property type="evidence" value="ECO:0007669"/>
    <property type="project" value="UniProtKB-UniRule"/>
</dbReference>
<dbReference type="GO" id="GO:0003743">
    <property type="term" value="F:translation initiation factor activity"/>
    <property type="evidence" value="ECO:0007669"/>
    <property type="project" value="UniProtKB-UniRule"/>
</dbReference>
<dbReference type="CDD" id="cd04451">
    <property type="entry name" value="S1_IF1"/>
    <property type="match status" value="1"/>
</dbReference>
<dbReference type="FunFam" id="2.40.50.140:FF:000002">
    <property type="entry name" value="Translation initiation factor IF-1"/>
    <property type="match status" value="1"/>
</dbReference>
<dbReference type="Gene3D" id="2.40.50.140">
    <property type="entry name" value="Nucleic acid-binding proteins"/>
    <property type="match status" value="1"/>
</dbReference>
<dbReference type="HAMAP" id="MF_00075">
    <property type="entry name" value="IF_1"/>
    <property type="match status" value="1"/>
</dbReference>
<dbReference type="InterPro" id="IPR012340">
    <property type="entry name" value="NA-bd_OB-fold"/>
</dbReference>
<dbReference type="InterPro" id="IPR006196">
    <property type="entry name" value="RNA-binding_domain_S1_IF1"/>
</dbReference>
<dbReference type="InterPro" id="IPR003029">
    <property type="entry name" value="S1_domain"/>
</dbReference>
<dbReference type="InterPro" id="IPR004368">
    <property type="entry name" value="TIF_IF1"/>
</dbReference>
<dbReference type="NCBIfam" id="TIGR00008">
    <property type="entry name" value="infA"/>
    <property type="match status" value="1"/>
</dbReference>
<dbReference type="PANTHER" id="PTHR33370">
    <property type="entry name" value="TRANSLATION INITIATION FACTOR IF-1, CHLOROPLASTIC"/>
    <property type="match status" value="1"/>
</dbReference>
<dbReference type="PANTHER" id="PTHR33370:SF1">
    <property type="entry name" value="TRANSLATION INITIATION FACTOR IF-1, CHLOROPLASTIC"/>
    <property type="match status" value="1"/>
</dbReference>
<dbReference type="Pfam" id="PF01176">
    <property type="entry name" value="eIF-1a"/>
    <property type="match status" value="1"/>
</dbReference>
<dbReference type="SMART" id="SM00316">
    <property type="entry name" value="S1"/>
    <property type="match status" value="1"/>
</dbReference>
<dbReference type="SUPFAM" id="SSF50249">
    <property type="entry name" value="Nucleic acid-binding proteins"/>
    <property type="match status" value="1"/>
</dbReference>
<dbReference type="PROSITE" id="PS50832">
    <property type="entry name" value="S1_IF1_TYPE"/>
    <property type="match status" value="1"/>
</dbReference>
<reference key="1">
    <citation type="journal article" date="2009" name="Genome Biol.">
        <title>Genomic and genetic analyses of diversity and plant interactions of Pseudomonas fluorescens.</title>
        <authorList>
            <person name="Silby M.W."/>
            <person name="Cerdeno-Tarraga A.M."/>
            <person name="Vernikos G.S."/>
            <person name="Giddens S.R."/>
            <person name="Jackson R.W."/>
            <person name="Preston G.M."/>
            <person name="Zhang X.-X."/>
            <person name="Moon C.D."/>
            <person name="Gehrig S.M."/>
            <person name="Godfrey S.A.C."/>
            <person name="Knight C.G."/>
            <person name="Malone J.G."/>
            <person name="Robinson Z."/>
            <person name="Spiers A.J."/>
            <person name="Harris S."/>
            <person name="Challis G.L."/>
            <person name="Yaxley A.M."/>
            <person name="Harris D."/>
            <person name="Seeger K."/>
            <person name="Murphy L."/>
            <person name="Rutter S."/>
            <person name="Squares R."/>
            <person name="Quail M.A."/>
            <person name="Saunders E."/>
            <person name="Mavromatis K."/>
            <person name="Brettin T.S."/>
            <person name="Bentley S.D."/>
            <person name="Hothersall J."/>
            <person name="Stephens E."/>
            <person name="Thomas C.M."/>
            <person name="Parkhill J."/>
            <person name="Levy S.B."/>
            <person name="Rainey P.B."/>
            <person name="Thomson N.R."/>
        </authorList>
    </citation>
    <scope>NUCLEOTIDE SEQUENCE [LARGE SCALE GENOMIC DNA]</scope>
    <source>
        <strain>Pf0-1</strain>
    </source>
</reference>